<sequence length="502" mass="54584">MAIKAEEISALLRSQIENYESEMSVTDVGTVLQIGDGIALIHGLNDVMAGELVEFHNGVLGLAQNLEESNVGVVILGPYTGITEGDEVKRTGRIMEVPVGEELIGRVVNPLGQPIDGQGPINTTKTRPVEKKATGVMDRKSVDEPLQTGIKAIDALVPIGRGQRELIIGDRQTGKTTIAIDTILNQKDQGTICIYVAIGQKDSTVRANVEKLRQAGALDYTIVVAASASEPSPLLYIAPYSGVTMGEEFMFNGKHVLIVYDDLTKQAAAYRELSLLLRRPPGREAYPGDVFYLHSRLLERAAKLNDDLGGGSITALPIIETQAGDISAYVPTNVISITDGQIFLQSDLFFSGVRPAINAGQSVSRVGGSAQIKAMKKVAGTLRLDLASYRELESFAQFGSDLDEFTASKLERGKRTVEVLKQDQNKPLPVEHQVLIIYALTKGYLDDIPVVDITRFEDELNHWAESNATELLNEIRETGGLPDAEKFDTAINEFKKSFSKSE</sequence>
<dbReference type="EC" id="7.1.2.2" evidence="1"/>
<dbReference type="EMBL" id="CP000736">
    <property type="protein sequence ID" value="ABR53008.1"/>
    <property type="molecule type" value="Genomic_DNA"/>
</dbReference>
<dbReference type="SMR" id="A6U3J0"/>
<dbReference type="KEGG" id="sah:SaurJH1_2179"/>
<dbReference type="HOGENOM" id="CLU_010091_2_1_9"/>
<dbReference type="GO" id="GO:0005886">
    <property type="term" value="C:plasma membrane"/>
    <property type="evidence" value="ECO:0007669"/>
    <property type="project" value="UniProtKB-SubCell"/>
</dbReference>
<dbReference type="GO" id="GO:0045259">
    <property type="term" value="C:proton-transporting ATP synthase complex"/>
    <property type="evidence" value="ECO:0007669"/>
    <property type="project" value="UniProtKB-KW"/>
</dbReference>
<dbReference type="GO" id="GO:0043531">
    <property type="term" value="F:ADP binding"/>
    <property type="evidence" value="ECO:0007669"/>
    <property type="project" value="TreeGrafter"/>
</dbReference>
<dbReference type="GO" id="GO:0005524">
    <property type="term" value="F:ATP binding"/>
    <property type="evidence" value="ECO:0007669"/>
    <property type="project" value="UniProtKB-UniRule"/>
</dbReference>
<dbReference type="GO" id="GO:0046933">
    <property type="term" value="F:proton-transporting ATP synthase activity, rotational mechanism"/>
    <property type="evidence" value="ECO:0007669"/>
    <property type="project" value="UniProtKB-UniRule"/>
</dbReference>
<dbReference type="CDD" id="cd18113">
    <property type="entry name" value="ATP-synt_F1_alpha_C"/>
    <property type="match status" value="1"/>
</dbReference>
<dbReference type="CDD" id="cd18116">
    <property type="entry name" value="ATP-synt_F1_alpha_N"/>
    <property type="match status" value="1"/>
</dbReference>
<dbReference type="CDD" id="cd01132">
    <property type="entry name" value="F1-ATPase_alpha_CD"/>
    <property type="match status" value="1"/>
</dbReference>
<dbReference type="FunFam" id="1.20.150.20:FF:000001">
    <property type="entry name" value="ATP synthase subunit alpha"/>
    <property type="match status" value="1"/>
</dbReference>
<dbReference type="FunFam" id="2.40.30.20:FF:000001">
    <property type="entry name" value="ATP synthase subunit alpha"/>
    <property type="match status" value="1"/>
</dbReference>
<dbReference type="FunFam" id="3.40.50.300:FF:000002">
    <property type="entry name" value="ATP synthase subunit alpha"/>
    <property type="match status" value="1"/>
</dbReference>
<dbReference type="Gene3D" id="2.40.30.20">
    <property type="match status" value="1"/>
</dbReference>
<dbReference type="Gene3D" id="1.20.150.20">
    <property type="entry name" value="ATP synthase alpha/beta chain, C-terminal domain"/>
    <property type="match status" value="1"/>
</dbReference>
<dbReference type="Gene3D" id="3.40.50.300">
    <property type="entry name" value="P-loop containing nucleotide triphosphate hydrolases"/>
    <property type="match status" value="1"/>
</dbReference>
<dbReference type="HAMAP" id="MF_01346">
    <property type="entry name" value="ATP_synth_alpha_bact"/>
    <property type="match status" value="1"/>
</dbReference>
<dbReference type="InterPro" id="IPR023366">
    <property type="entry name" value="ATP_synth_asu-like_sf"/>
</dbReference>
<dbReference type="InterPro" id="IPR000793">
    <property type="entry name" value="ATP_synth_asu_C"/>
</dbReference>
<dbReference type="InterPro" id="IPR038376">
    <property type="entry name" value="ATP_synth_asu_C_sf"/>
</dbReference>
<dbReference type="InterPro" id="IPR033732">
    <property type="entry name" value="ATP_synth_F1_a_nt-bd_dom"/>
</dbReference>
<dbReference type="InterPro" id="IPR005294">
    <property type="entry name" value="ATP_synth_F1_asu"/>
</dbReference>
<dbReference type="InterPro" id="IPR020003">
    <property type="entry name" value="ATPase_a/bsu_AS"/>
</dbReference>
<dbReference type="InterPro" id="IPR004100">
    <property type="entry name" value="ATPase_F1/V1/A1_a/bsu_N"/>
</dbReference>
<dbReference type="InterPro" id="IPR036121">
    <property type="entry name" value="ATPase_F1/V1/A1_a/bsu_N_sf"/>
</dbReference>
<dbReference type="InterPro" id="IPR000194">
    <property type="entry name" value="ATPase_F1/V1/A1_a/bsu_nucl-bd"/>
</dbReference>
<dbReference type="InterPro" id="IPR027417">
    <property type="entry name" value="P-loop_NTPase"/>
</dbReference>
<dbReference type="NCBIfam" id="TIGR00962">
    <property type="entry name" value="atpA"/>
    <property type="match status" value="1"/>
</dbReference>
<dbReference type="NCBIfam" id="NF009884">
    <property type="entry name" value="PRK13343.1"/>
    <property type="match status" value="1"/>
</dbReference>
<dbReference type="PANTHER" id="PTHR48082">
    <property type="entry name" value="ATP SYNTHASE SUBUNIT ALPHA, MITOCHONDRIAL"/>
    <property type="match status" value="1"/>
</dbReference>
<dbReference type="PANTHER" id="PTHR48082:SF2">
    <property type="entry name" value="ATP SYNTHASE SUBUNIT ALPHA, MITOCHONDRIAL"/>
    <property type="match status" value="1"/>
</dbReference>
<dbReference type="Pfam" id="PF00006">
    <property type="entry name" value="ATP-synt_ab"/>
    <property type="match status" value="1"/>
</dbReference>
<dbReference type="Pfam" id="PF00306">
    <property type="entry name" value="ATP-synt_ab_C"/>
    <property type="match status" value="1"/>
</dbReference>
<dbReference type="Pfam" id="PF02874">
    <property type="entry name" value="ATP-synt_ab_N"/>
    <property type="match status" value="1"/>
</dbReference>
<dbReference type="PIRSF" id="PIRSF039088">
    <property type="entry name" value="F_ATPase_subunit_alpha"/>
    <property type="match status" value="1"/>
</dbReference>
<dbReference type="SUPFAM" id="SSF47917">
    <property type="entry name" value="C-terminal domain of alpha and beta subunits of F1 ATP synthase"/>
    <property type="match status" value="1"/>
</dbReference>
<dbReference type="SUPFAM" id="SSF50615">
    <property type="entry name" value="N-terminal domain of alpha and beta subunits of F1 ATP synthase"/>
    <property type="match status" value="1"/>
</dbReference>
<dbReference type="SUPFAM" id="SSF52540">
    <property type="entry name" value="P-loop containing nucleoside triphosphate hydrolases"/>
    <property type="match status" value="1"/>
</dbReference>
<dbReference type="PROSITE" id="PS00152">
    <property type="entry name" value="ATPASE_ALPHA_BETA"/>
    <property type="match status" value="1"/>
</dbReference>
<gene>
    <name evidence="1" type="primary">atpA</name>
    <name type="ordered locus">SaurJH1_2179</name>
</gene>
<evidence type="ECO:0000255" key="1">
    <source>
        <dbReference type="HAMAP-Rule" id="MF_01346"/>
    </source>
</evidence>
<keyword id="KW-0066">ATP synthesis</keyword>
<keyword id="KW-0067">ATP-binding</keyword>
<keyword id="KW-1003">Cell membrane</keyword>
<keyword id="KW-0139">CF(1)</keyword>
<keyword id="KW-0375">Hydrogen ion transport</keyword>
<keyword id="KW-0406">Ion transport</keyword>
<keyword id="KW-0472">Membrane</keyword>
<keyword id="KW-0547">Nucleotide-binding</keyword>
<keyword id="KW-1278">Translocase</keyword>
<keyword id="KW-0813">Transport</keyword>
<comment type="function">
    <text evidence="1">Produces ATP from ADP in the presence of a proton gradient across the membrane. The alpha chain is a regulatory subunit.</text>
</comment>
<comment type="catalytic activity">
    <reaction evidence="1">
        <text>ATP + H2O + 4 H(+)(in) = ADP + phosphate + 5 H(+)(out)</text>
        <dbReference type="Rhea" id="RHEA:57720"/>
        <dbReference type="ChEBI" id="CHEBI:15377"/>
        <dbReference type="ChEBI" id="CHEBI:15378"/>
        <dbReference type="ChEBI" id="CHEBI:30616"/>
        <dbReference type="ChEBI" id="CHEBI:43474"/>
        <dbReference type="ChEBI" id="CHEBI:456216"/>
        <dbReference type="EC" id="7.1.2.2"/>
    </reaction>
</comment>
<comment type="subunit">
    <text evidence="1">F-type ATPases have 2 components, CF(1) - the catalytic core - and CF(0) - the membrane proton channel. CF(1) has five subunits: alpha(3), beta(3), gamma(1), delta(1), epsilon(1). CF(0) has three main subunits: a(1), b(2) and c(9-12). The alpha and beta chains form an alternating ring which encloses part of the gamma chain. CF(1) is attached to CF(0) by a central stalk formed by the gamma and epsilon chains, while a peripheral stalk is formed by the delta and b chains.</text>
</comment>
<comment type="subcellular location">
    <subcellularLocation>
        <location evidence="1">Cell membrane</location>
        <topology evidence="1">Peripheral membrane protein</topology>
    </subcellularLocation>
</comment>
<comment type="similarity">
    <text evidence="1">Belongs to the ATPase alpha/beta chains family.</text>
</comment>
<proteinExistence type="inferred from homology"/>
<accession>A6U3J0</accession>
<name>ATPA_STAA2</name>
<organism>
    <name type="scientific">Staphylococcus aureus (strain JH1)</name>
    <dbReference type="NCBI Taxonomy" id="359787"/>
    <lineage>
        <taxon>Bacteria</taxon>
        <taxon>Bacillati</taxon>
        <taxon>Bacillota</taxon>
        <taxon>Bacilli</taxon>
        <taxon>Bacillales</taxon>
        <taxon>Staphylococcaceae</taxon>
        <taxon>Staphylococcus</taxon>
    </lineage>
</organism>
<reference key="1">
    <citation type="submission" date="2007-06" db="EMBL/GenBank/DDBJ databases">
        <title>Complete sequence of chromosome of Staphylococcus aureus subsp. aureus JH1.</title>
        <authorList>
            <consortium name="US DOE Joint Genome Institute"/>
            <person name="Copeland A."/>
            <person name="Lucas S."/>
            <person name="Lapidus A."/>
            <person name="Barry K."/>
            <person name="Detter J.C."/>
            <person name="Glavina del Rio T."/>
            <person name="Hammon N."/>
            <person name="Israni S."/>
            <person name="Dalin E."/>
            <person name="Tice H."/>
            <person name="Pitluck S."/>
            <person name="Chain P."/>
            <person name="Malfatti S."/>
            <person name="Shin M."/>
            <person name="Vergez L."/>
            <person name="Schmutz J."/>
            <person name="Larimer F."/>
            <person name="Land M."/>
            <person name="Hauser L."/>
            <person name="Kyrpides N."/>
            <person name="Ivanova N."/>
            <person name="Tomasz A."/>
            <person name="Richardson P."/>
        </authorList>
    </citation>
    <scope>NUCLEOTIDE SEQUENCE [LARGE SCALE GENOMIC DNA]</scope>
    <source>
        <strain>JH1</strain>
    </source>
</reference>
<feature type="chain" id="PRO_1000086899" description="ATP synthase subunit alpha">
    <location>
        <begin position="1"/>
        <end position="502"/>
    </location>
</feature>
<feature type="binding site" evidence="1">
    <location>
        <begin position="169"/>
        <end position="176"/>
    </location>
    <ligand>
        <name>ATP</name>
        <dbReference type="ChEBI" id="CHEBI:30616"/>
    </ligand>
</feature>
<feature type="site" description="Required for activity" evidence="1">
    <location>
        <position position="362"/>
    </location>
</feature>
<protein>
    <recommendedName>
        <fullName evidence="1">ATP synthase subunit alpha</fullName>
        <ecNumber evidence="1">7.1.2.2</ecNumber>
    </recommendedName>
    <alternativeName>
        <fullName evidence="1">ATP synthase F1 sector subunit alpha</fullName>
    </alternativeName>
    <alternativeName>
        <fullName evidence="1">F-ATPase subunit alpha</fullName>
    </alternativeName>
</protein>